<accession>Q9Y625</accession>
<accession>A8K279</accession>
<accession>Q96SG5</accession>
<accession>Q96SG8</accession>
<accession>Q9H1P4</accession>
<name>GPC6_HUMAN</name>
<keyword id="KW-1003">Cell membrane</keyword>
<keyword id="KW-0242">Dwarfism</keyword>
<keyword id="KW-0325">Glycoprotein</keyword>
<keyword id="KW-0336">GPI-anchor</keyword>
<keyword id="KW-0357">Heparan sulfate</keyword>
<keyword id="KW-0449">Lipoprotein</keyword>
<keyword id="KW-0472">Membrane</keyword>
<keyword id="KW-0654">Proteoglycan</keyword>
<keyword id="KW-1267">Proteomics identification</keyword>
<keyword id="KW-1185">Reference proteome</keyword>
<keyword id="KW-0964">Secreted</keyword>
<keyword id="KW-0732">Signal</keyword>
<feature type="signal peptide" evidence="2">
    <location>
        <begin position="1"/>
        <end position="23"/>
    </location>
</feature>
<feature type="chain" id="PRO_0000012323" description="Glypican-6">
    <location>
        <begin position="24"/>
        <end position="529"/>
    </location>
</feature>
<feature type="chain" id="PRO_0000333851" description="Secreted glypican-6">
    <location>
        <begin position="24"/>
        <end status="unknown"/>
    </location>
</feature>
<feature type="propeptide" id="PRO_0000012324" description="Removed in mature form" evidence="2">
    <location>
        <begin position="530"/>
        <end position="555"/>
    </location>
</feature>
<feature type="region of interest" description="Disordered" evidence="3">
    <location>
        <begin position="348"/>
        <end position="376"/>
    </location>
</feature>
<feature type="region of interest" description="Disordered" evidence="3">
    <location>
        <begin position="480"/>
        <end position="501"/>
    </location>
</feature>
<feature type="compositionally biased region" description="Low complexity" evidence="3">
    <location>
        <begin position="348"/>
        <end position="357"/>
    </location>
</feature>
<feature type="lipid moiety-binding region" description="GPI-anchor amidated serine" evidence="2">
    <location>
        <position position="529"/>
    </location>
</feature>
<feature type="sequence variant" id="VAR_024229" description="In dbSNP:rs1535692." evidence="5">
    <original>V</original>
    <variation>M</variation>
    <location>
        <position position="412"/>
    </location>
</feature>
<feature type="sequence conflict" description="In Ref. 4; BAF82833." evidence="8" ref="4">
    <original>L</original>
    <variation>P</variation>
    <location>
        <position position="15"/>
    </location>
</feature>
<evidence type="ECO:0000250" key="1"/>
<evidence type="ECO:0000255" key="2"/>
<evidence type="ECO:0000256" key="3">
    <source>
        <dbReference type="SAM" id="MobiDB-lite"/>
    </source>
</evidence>
<evidence type="ECO:0000269" key="4">
    <source>
    </source>
</evidence>
<evidence type="ECO:0000269" key="5">
    <source>
    </source>
</evidence>
<evidence type="ECO:0000269" key="6">
    <source>
    </source>
</evidence>
<evidence type="ECO:0000269" key="7">
    <source>
    </source>
</evidence>
<evidence type="ECO:0000305" key="8"/>
<comment type="function">
    <text evidence="1 7">Cell surface proteoglycan that bears heparan sulfate. Putative cell surface coreceptor for growth factors, extracellular matrix proteins, proteases and anti-proteases (By similarity). Enhances migration and invasion of cancer cells through WNT5A signaling.</text>
</comment>
<comment type="interaction">
    <interactant intactId="EBI-3046690">
        <id>Q9Y625</id>
    </interactant>
    <interactant intactId="EBI-3050469">
        <id>O75487</id>
        <label>GPC4</label>
    </interactant>
    <organismsDiffer>false</organismsDiffer>
    <experiments>4</experiments>
</comment>
<comment type="subcellular location">
    <subcellularLocation>
        <location evidence="1">Cell membrane</location>
        <topology evidence="1">Lipid-anchor</topology>
        <topology evidence="1">GPI-anchor</topology>
        <orientation evidence="1">Extracellular side</orientation>
    </subcellularLocation>
</comment>
<comment type="subcellular location">
    <molecule>Secreted glypican-6</molecule>
    <subcellularLocation>
        <location evidence="1">Secreted</location>
        <location evidence="1">Extracellular space</location>
    </subcellularLocation>
</comment>
<comment type="tissue specificity">
    <text evidence="4 7">Widely expressed. High expression in fetal kidney and lung and lower expressions in fetal liver and brain. In adult tissues, very abundant in ovary, high levels also observed in liver, kidney, small intestine and colon. Not detected in peripheral blood leukocytes. Detected in breast cancer cells (at protein level).</text>
</comment>
<comment type="induction">
    <text evidence="7">Expression is induced by NFATC2.</text>
</comment>
<comment type="disease" evidence="6">
    <disease id="DI-02618">
        <name>Omodysplasia 1</name>
        <acronym>OMOD1</acronym>
        <description>A rare autosomal recessive skeletal dysplasia characterized by facial dysmorphism and severe congenital micromelia with shortening and distal tapering of the humeri and femora, to give a club-like appearance. Typical facial features include a prominent forehead, frontal bossing, short nose with a depressed broad bridge, short columella, anteverted nostrils, long philtrum, and small chin.</description>
        <dbReference type="MIM" id="258315"/>
    </disease>
    <text>The disease is caused by variants affecting the gene represented in this entry. Point mutations leading to protein truncation, as well as larger genomic rearrangements resulting in exon deletions, have been found in family segregating omodysplasia type 1. All mutations identified in individuals affected by omodysplasia could lead to the absence of a functional protein, the mutant RNAs being suspected to be nonsense-mediated mRNA decay (NMD) targets. Even if the mRNA escapes NMD and is translated, all mutations are expected to disrupt the three-dimensional protein structure and often to abolish multiple highly conserved cysteine residues.</text>
</comment>
<comment type="similarity">
    <text evidence="8">Belongs to the glypican family.</text>
</comment>
<protein>
    <recommendedName>
        <fullName>Glypican-6</fullName>
    </recommendedName>
    <component>
        <recommendedName>
            <fullName>Secreted glypican-6</fullName>
        </recommendedName>
    </component>
</protein>
<sequence length="555" mass="62736">MPSWIGAVILPLLGLLLSLPAGADVKARSCGEVRQAYGAKGFSLADIPYQEIAGEHLRICPQEYTCCTTEMEDKLSQQSKLEFENLVEETSHFVRTTFVSRHKKFDEFFRELLENAEKSLNDMFVRTYGMLYMQNSEVFQDLFTELKRYYTGGNVNLEEMLNDFWARLLERMFQLINPQYHFSEDYLECVSKYTDQLKPFGDVPRKLKIQVTRAFIAARTFVQGLTVGREVANRVSKVSPTPGCIRALMKMLYCPYCRGLPTVRPCNNYCLNVMKGCLANQADLDTEWNLFIDAMLLVAERLEGPFNIESVMDPIDVKISEAIMNMQENSMQVSAKVFQGCGQPKPAPALRSARSAPENFNTRFRPYNPEERPTTAAGTSLDRLVTDIKEKLKLSKKVWSALPYTICKDESVTAGTSNEEECWNGHSKARYLPEIMNDGLTNQINNPEVDVDITRPDTFIRQQIMALRVMTNKLKNAYNGNDVNFQDTSDESSGSGSGSGCMDDVCPTEFEFVTTEAPAVDPDRREVDSSAAQRGHSLLSWSLTCIVLALQRLCR</sequence>
<dbReference type="EMBL" id="AF111178">
    <property type="protein sequence ID" value="AAD31392.1"/>
    <property type="molecule type" value="mRNA"/>
</dbReference>
<dbReference type="EMBL" id="AF105267">
    <property type="protein sequence ID" value="AAD55749.1"/>
    <property type="molecule type" value="mRNA"/>
</dbReference>
<dbReference type="EMBL" id="AY358462">
    <property type="protein sequence ID" value="AAQ88827.1"/>
    <property type="molecule type" value="mRNA"/>
</dbReference>
<dbReference type="EMBL" id="BC106947">
    <property type="protein sequence ID" value="AAI06948.1"/>
    <property type="molecule type" value="mRNA"/>
</dbReference>
<dbReference type="EMBL" id="AK290144">
    <property type="protein sequence ID" value="BAF82833.1"/>
    <property type="molecule type" value="mRNA"/>
</dbReference>
<dbReference type="EMBL" id="AL139798">
    <property type="status" value="NOT_ANNOTATED_CDS"/>
    <property type="molecule type" value="Genomic_DNA"/>
</dbReference>
<dbReference type="EMBL" id="AL160036">
    <property type="status" value="NOT_ANNOTATED_CDS"/>
    <property type="molecule type" value="Genomic_DNA"/>
</dbReference>
<dbReference type="EMBL" id="AL161426">
    <property type="status" value="NOT_ANNOTATED_CDS"/>
    <property type="molecule type" value="Genomic_DNA"/>
</dbReference>
<dbReference type="EMBL" id="AL162455">
    <property type="status" value="NOT_ANNOTATED_CDS"/>
    <property type="molecule type" value="Genomic_DNA"/>
</dbReference>
<dbReference type="EMBL" id="AL354811">
    <property type="status" value="NOT_ANNOTATED_CDS"/>
    <property type="molecule type" value="Genomic_DNA"/>
</dbReference>
<dbReference type="EMBL" id="AL137144">
    <property type="status" value="NOT_ANNOTATED_CDS"/>
    <property type="molecule type" value="Genomic_DNA"/>
</dbReference>
<dbReference type="CCDS" id="CCDS9469.1"/>
<dbReference type="RefSeq" id="NP_005699.1">
    <property type="nucleotide sequence ID" value="NM_005708.5"/>
</dbReference>
<dbReference type="SMR" id="Q9Y625"/>
<dbReference type="BioGRID" id="115391">
    <property type="interactions" value="33"/>
</dbReference>
<dbReference type="FunCoup" id="Q9Y625">
    <property type="interactions" value="1682"/>
</dbReference>
<dbReference type="IntAct" id="Q9Y625">
    <property type="interactions" value="26"/>
</dbReference>
<dbReference type="STRING" id="9606.ENSP00000366246"/>
<dbReference type="GlyGen" id="Q9Y625">
    <property type="glycosylation" value="3 sites, 1 O-linked glycan (2 sites)"/>
</dbReference>
<dbReference type="iPTMnet" id="Q9Y625"/>
<dbReference type="PhosphoSitePlus" id="Q9Y625"/>
<dbReference type="BioMuta" id="GPC6"/>
<dbReference type="DMDM" id="9973298"/>
<dbReference type="jPOST" id="Q9Y625"/>
<dbReference type="MassIVE" id="Q9Y625"/>
<dbReference type="PaxDb" id="9606-ENSP00000366246"/>
<dbReference type="PeptideAtlas" id="Q9Y625"/>
<dbReference type="ProteomicsDB" id="86591"/>
<dbReference type="Pumba" id="Q9Y625"/>
<dbReference type="Antibodypedia" id="2876">
    <property type="antibodies" value="204 antibodies from 24 providers"/>
</dbReference>
<dbReference type="CPTC" id="Q9Y625">
    <property type="antibodies" value="1 antibody"/>
</dbReference>
<dbReference type="DNASU" id="10082"/>
<dbReference type="Ensembl" id="ENST00000377047.9">
    <property type="protein sequence ID" value="ENSP00000366246.3"/>
    <property type="gene ID" value="ENSG00000183098.12"/>
</dbReference>
<dbReference type="GeneID" id="10082"/>
<dbReference type="KEGG" id="hsa:10082"/>
<dbReference type="MANE-Select" id="ENST00000377047.9">
    <property type="protein sequence ID" value="ENSP00000366246.3"/>
    <property type="RefSeq nucleotide sequence ID" value="NM_005708.5"/>
    <property type="RefSeq protein sequence ID" value="NP_005699.1"/>
</dbReference>
<dbReference type="UCSC" id="uc001vlt.4">
    <property type="organism name" value="human"/>
</dbReference>
<dbReference type="AGR" id="HGNC:4454"/>
<dbReference type="CTD" id="10082"/>
<dbReference type="DisGeNET" id="10082"/>
<dbReference type="GeneCards" id="GPC6"/>
<dbReference type="HGNC" id="HGNC:4454">
    <property type="gene designation" value="GPC6"/>
</dbReference>
<dbReference type="HPA" id="ENSG00000183098">
    <property type="expression patterns" value="Low tissue specificity"/>
</dbReference>
<dbReference type="MalaCards" id="GPC6"/>
<dbReference type="MIM" id="258315">
    <property type="type" value="phenotype"/>
</dbReference>
<dbReference type="MIM" id="604404">
    <property type="type" value="gene"/>
</dbReference>
<dbReference type="neXtProt" id="NX_Q9Y625"/>
<dbReference type="OpenTargets" id="ENSG00000183098"/>
<dbReference type="Orphanet" id="93329">
    <property type="disease" value="Autosomal recessive omodysplasia"/>
</dbReference>
<dbReference type="PharmGKB" id="PA28835"/>
<dbReference type="VEuPathDB" id="HostDB:ENSG00000183098"/>
<dbReference type="eggNOG" id="KOG3821">
    <property type="taxonomic scope" value="Eukaryota"/>
</dbReference>
<dbReference type="GeneTree" id="ENSGT01050000244897"/>
<dbReference type="HOGENOM" id="CLU_024658_2_0_1"/>
<dbReference type="InParanoid" id="Q9Y625"/>
<dbReference type="OMA" id="XDESSGS"/>
<dbReference type="OrthoDB" id="10010764at2759"/>
<dbReference type="PAN-GO" id="Q9Y625">
    <property type="GO annotations" value="6 GO annotations based on evolutionary models"/>
</dbReference>
<dbReference type="PhylomeDB" id="Q9Y625"/>
<dbReference type="TreeFam" id="TF105317"/>
<dbReference type="PathwayCommons" id="Q9Y625"/>
<dbReference type="Reactome" id="R-HSA-1971475">
    <property type="pathway name" value="A tetrasaccharide linker sequence is required for GAG synthesis"/>
</dbReference>
<dbReference type="Reactome" id="R-HSA-2022928">
    <property type="pathway name" value="HS-GAG biosynthesis"/>
</dbReference>
<dbReference type="Reactome" id="R-HSA-2024096">
    <property type="pathway name" value="HS-GAG degradation"/>
</dbReference>
<dbReference type="Reactome" id="R-HSA-3560783">
    <property type="pathway name" value="Defective B4GALT7 causes EDS, progeroid type"/>
</dbReference>
<dbReference type="Reactome" id="R-HSA-3560801">
    <property type="pathway name" value="Defective B3GAT3 causes JDSSDHD"/>
</dbReference>
<dbReference type="Reactome" id="R-HSA-3656237">
    <property type="pathway name" value="Defective EXT2 causes exostoses 2"/>
</dbReference>
<dbReference type="Reactome" id="R-HSA-3656253">
    <property type="pathway name" value="Defective EXT1 causes exostoses 1, TRPS2 and CHDS"/>
</dbReference>
<dbReference type="Reactome" id="R-HSA-4420332">
    <property type="pathway name" value="Defective B3GALT6 causes EDSP2 and SEMDJL1"/>
</dbReference>
<dbReference type="Reactome" id="R-HSA-9694614">
    <property type="pathway name" value="Attachment and Entry"/>
</dbReference>
<dbReference type="Reactome" id="R-HSA-975634">
    <property type="pathway name" value="Retinoid metabolism and transport"/>
</dbReference>
<dbReference type="Reactome" id="R-HSA-9820960">
    <property type="pathway name" value="Respiratory syncytial virus (RSV) attachment and entry"/>
</dbReference>
<dbReference type="Reactome" id="R-HSA-9833110">
    <property type="pathway name" value="RSV-host interactions"/>
</dbReference>
<dbReference type="SignaLink" id="Q9Y625"/>
<dbReference type="SIGNOR" id="Q9Y625"/>
<dbReference type="BioGRID-ORCS" id="10082">
    <property type="hits" value="9 hits in 1146 CRISPR screens"/>
</dbReference>
<dbReference type="ChiTaRS" id="GPC6">
    <property type="organism name" value="human"/>
</dbReference>
<dbReference type="GeneWiki" id="Glypican_6"/>
<dbReference type="GenomeRNAi" id="10082"/>
<dbReference type="Pharos" id="Q9Y625">
    <property type="development level" value="Tbio"/>
</dbReference>
<dbReference type="PRO" id="PR:Q9Y625"/>
<dbReference type="Proteomes" id="UP000005640">
    <property type="component" value="Chromosome 13"/>
</dbReference>
<dbReference type="RNAct" id="Q9Y625">
    <property type="molecule type" value="protein"/>
</dbReference>
<dbReference type="Bgee" id="ENSG00000183098">
    <property type="expression patterns" value="Expressed in cartilage tissue and 168 other cell types or tissues"/>
</dbReference>
<dbReference type="ExpressionAtlas" id="Q9Y625">
    <property type="expression patterns" value="baseline and differential"/>
</dbReference>
<dbReference type="GO" id="GO:0009986">
    <property type="term" value="C:cell surface"/>
    <property type="evidence" value="ECO:0000318"/>
    <property type="project" value="GO_Central"/>
</dbReference>
<dbReference type="GO" id="GO:0005576">
    <property type="term" value="C:extracellular region"/>
    <property type="evidence" value="ECO:0007669"/>
    <property type="project" value="UniProtKB-SubCell"/>
</dbReference>
<dbReference type="GO" id="GO:0005796">
    <property type="term" value="C:Golgi lumen"/>
    <property type="evidence" value="ECO:0000304"/>
    <property type="project" value="Reactome"/>
</dbReference>
<dbReference type="GO" id="GO:0043202">
    <property type="term" value="C:lysosomal lumen"/>
    <property type="evidence" value="ECO:0000304"/>
    <property type="project" value="Reactome"/>
</dbReference>
<dbReference type="GO" id="GO:0005634">
    <property type="term" value="C:nucleus"/>
    <property type="evidence" value="ECO:0007005"/>
    <property type="project" value="UniProtKB"/>
</dbReference>
<dbReference type="GO" id="GO:0005886">
    <property type="term" value="C:plasma membrane"/>
    <property type="evidence" value="ECO:0000304"/>
    <property type="project" value="Reactome"/>
</dbReference>
<dbReference type="GO" id="GO:0098552">
    <property type="term" value="C:side of membrane"/>
    <property type="evidence" value="ECO:0007669"/>
    <property type="project" value="UniProtKB-KW"/>
</dbReference>
<dbReference type="GO" id="GO:0045202">
    <property type="term" value="C:synapse"/>
    <property type="evidence" value="ECO:0000318"/>
    <property type="project" value="GO_Central"/>
</dbReference>
<dbReference type="GO" id="GO:0015026">
    <property type="term" value="F:coreceptor activity"/>
    <property type="evidence" value="ECO:0000303"/>
    <property type="project" value="ParkinsonsUK-UCL"/>
</dbReference>
<dbReference type="GO" id="GO:0016477">
    <property type="term" value="P:cell migration"/>
    <property type="evidence" value="ECO:0000314"/>
    <property type="project" value="UniProtKB"/>
</dbReference>
<dbReference type="GO" id="GO:0098696">
    <property type="term" value="P:regulation of neurotransmitter receptor localization to postsynaptic specialization membrane"/>
    <property type="evidence" value="ECO:0000318"/>
    <property type="project" value="GO_Central"/>
</dbReference>
<dbReference type="GO" id="GO:0009966">
    <property type="term" value="P:regulation of signal transduction"/>
    <property type="evidence" value="ECO:0007669"/>
    <property type="project" value="InterPro"/>
</dbReference>
<dbReference type="InterPro" id="IPR001863">
    <property type="entry name" value="Glypican"/>
</dbReference>
<dbReference type="InterPro" id="IPR019803">
    <property type="entry name" value="Glypican_CS"/>
</dbReference>
<dbReference type="PANTHER" id="PTHR10822">
    <property type="entry name" value="GLYPICAN"/>
    <property type="match status" value="1"/>
</dbReference>
<dbReference type="PANTHER" id="PTHR10822:SF31">
    <property type="entry name" value="GLYPICAN-6"/>
    <property type="match status" value="1"/>
</dbReference>
<dbReference type="Pfam" id="PF01153">
    <property type="entry name" value="Glypican"/>
    <property type="match status" value="1"/>
</dbReference>
<dbReference type="PROSITE" id="PS01207">
    <property type="entry name" value="GLYPICAN"/>
    <property type="match status" value="1"/>
</dbReference>
<gene>
    <name type="primary">GPC6</name>
    <name type="ORF">UNQ369/PRO705</name>
</gene>
<proteinExistence type="evidence at protein level"/>
<organism>
    <name type="scientific">Homo sapiens</name>
    <name type="common">Human</name>
    <dbReference type="NCBI Taxonomy" id="9606"/>
    <lineage>
        <taxon>Eukaryota</taxon>
        <taxon>Metazoa</taxon>
        <taxon>Chordata</taxon>
        <taxon>Craniata</taxon>
        <taxon>Vertebrata</taxon>
        <taxon>Euteleostomi</taxon>
        <taxon>Mammalia</taxon>
        <taxon>Eutheria</taxon>
        <taxon>Euarchontoglires</taxon>
        <taxon>Primates</taxon>
        <taxon>Haplorrhini</taxon>
        <taxon>Catarrhini</taxon>
        <taxon>Hominidae</taxon>
        <taxon>Homo</taxon>
    </lineage>
</organism>
<reference key="1">
    <citation type="journal article" date="1999" name="Genomics">
        <title>GPC6, a novel member of the glypican gene family, encodes a product structurally related to GPC4 and is colocalized with GPC5 on human chromosome 13.</title>
        <authorList>
            <person name="Paine-Saunders S."/>
            <person name="Viviano B.L."/>
            <person name="Saunders S."/>
        </authorList>
    </citation>
    <scope>NUCLEOTIDE SEQUENCE [MRNA]</scope>
</reference>
<reference key="2">
    <citation type="journal article" date="1999" name="J. Biol. Chem.">
        <title>Glypican-6, a new member of the glypican family of cell surface heparan sulfate proteoglycans.</title>
        <authorList>
            <person name="Veugelers M."/>
            <person name="De Cat B."/>
            <person name="Ceulemans H."/>
            <person name="Bruystens A.-M."/>
            <person name="Coomans C."/>
            <person name="Duerr J."/>
            <person name="Vermeesch J."/>
            <person name="Marynen P."/>
            <person name="David G."/>
        </authorList>
    </citation>
    <scope>NUCLEOTIDE SEQUENCE [MRNA]</scope>
    <scope>TISSUE SPECIFICITY</scope>
    <source>
        <tissue>Fetal brain</tissue>
    </source>
</reference>
<reference key="3">
    <citation type="journal article" date="2003" name="Genome Res.">
        <title>The secreted protein discovery initiative (SPDI), a large-scale effort to identify novel human secreted and transmembrane proteins: a bioinformatics assessment.</title>
        <authorList>
            <person name="Clark H.F."/>
            <person name="Gurney A.L."/>
            <person name="Abaya E."/>
            <person name="Baker K."/>
            <person name="Baldwin D.T."/>
            <person name="Brush J."/>
            <person name="Chen J."/>
            <person name="Chow B."/>
            <person name="Chui C."/>
            <person name="Crowley C."/>
            <person name="Currell B."/>
            <person name="Deuel B."/>
            <person name="Dowd P."/>
            <person name="Eaton D."/>
            <person name="Foster J.S."/>
            <person name="Grimaldi C."/>
            <person name="Gu Q."/>
            <person name="Hass P.E."/>
            <person name="Heldens S."/>
            <person name="Huang A."/>
            <person name="Kim H.S."/>
            <person name="Klimowski L."/>
            <person name="Jin Y."/>
            <person name="Johnson S."/>
            <person name="Lee J."/>
            <person name="Lewis L."/>
            <person name="Liao D."/>
            <person name="Mark M.R."/>
            <person name="Robbie E."/>
            <person name="Sanchez C."/>
            <person name="Schoenfeld J."/>
            <person name="Seshagiri S."/>
            <person name="Simmons L."/>
            <person name="Singh J."/>
            <person name="Smith V."/>
            <person name="Stinson J."/>
            <person name="Vagts A."/>
            <person name="Vandlen R.L."/>
            <person name="Watanabe C."/>
            <person name="Wieand D."/>
            <person name="Woods K."/>
            <person name="Xie M.-H."/>
            <person name="Yansura D.G."/>
            <person name="Yi S."/>
            <person name="Yu G."/>
            <person name="Yuan J."/>
            <person name="Zhang M."/>
            <person name="Zhang Z."/>
            <person name="Goddard A.D."/>
            <person name="Wood W.I."/>
            <person name="Godowski P.J."/>
            <person name="Gray A.M."/>
        </authorList>
    </citation>
    <scope>NUCLEOTIDE SEQUENCE [LARGE SCALE MRNA]</scope>
</reference>
<reference key="4">
    <citation type="journal article" date="2004" name="Nat. Genet.">
        <title>Complete sequencing and characterization of 21,243 full-length human cDNAs.</title>
        <authorList>
            <person name="Ota T."/>
            <person name="Suzuki Y."/>
            <person name="Nishikawa T."/>
            <person name="Otsuki T."/>
            <person name="Sugiyama T."/>
            <person name="Irie R."/>
            <person name="Wakamatsu A."/>
            <person name="Hayashi K."/>
            <person name="Sato H."/>
            <person name="Nagai K."/>
            <person name="Kimura K."/>
            <person name="Makita H."/>
            <person name="Sekine M."/>
            <person name="Obayashi M."/>
            <person name="Nishi T."/>
            <person name="Shibahara T."/>
            <person name="Tanaka T."/>
            <person name="Ishii S."/>
            <person name="Yamamoto J."/>
            <person name="Saito K."/>
            <person name="Kawai Y."/>
            <person name="Isono Y."/>
            <person name="Nakamura Y."/>
            <person name="Nagahari K."/>
            <person name="Murakami K."/>
            <person name="Yasuda T."/>
            <person name="Iwayanagi T."/>
            <person name="Wagatsuma M."/>
            <person name="Shiratori A."/>
            <person name="Sudo H."/>
            <person name="Hosoiri T."/>
            <person name="Kaku Y."/>
            <person name="Kodaira H."/>
            <person name="Kondo H."/>
            <person name="Sugawara M."/>
            <person name="Takahashi M."/>
            <person name="Kanda K."/>
            <person name="Yokoi T."/>
            <person name="Furuya T."/>
            <person name="Kikkawa E."/>
            <person name="Omura Y."/>
            <person name="Abe K."/>
            <person name="Kamihara K."/>
            <person name="Katsuta N."/>
            <person name="Sato K."/>
            <person name="Tanikawa M."/>
            <person name="Yamazaki M."/>
            <person name="Ninomiya K."/>
            <person name="Ishibashi T."/>
            <person name="Yamashita H."/>
            <person name="Murakawa K."/>
            <person name="Fujimori K."/>
            <person name="Tanai H."/>
            <person name="Kimata M."/>
            <person name="Watanabe M."/>
            <person name="Hiraoka S."/>
            <person name="Chiba Y."/>
            <person name="Ishida S."/>
            <person name="Ono Y."/>
            <person name="Takiguchi S."/>
            <person name="Watanabe S."/>
            <person name="Yosida M."/>
            <person name="Hotuta T."/>
            <person name="Kusano J."/>
            <person name="Kanehori K."/>
            <person name="Takahashi-Fujii A."/>
            <person name="Hara H."/>
            <person name="Tanase T.-O."/>
            <person name="Nomura Y."/>
            <person name="Togiya S."/>
            <person name="Komai F."/>
            <person name="Hara R."/>
            <person name="Takeuchi K."/>
            <person name="Arita M."/>
            <person name="Imose N."/>
            <person name="Musashino K."/>
            <person name="Yuuki H."/>
            <person name="Oshima A."/>
            <person name="Sasaki N."/>
            <person name="Aotsuka S."/>
            <person name="Yoshikawa Y."/>
            <person name="Matsunawa H."/>
            <person name="Ichihara T."/>
            <person name="Shiohata N."/>
            <person name="Sano S."/>
            <person name="Moriya S."/>
            <person name="Momiyama H."/>
            <person name="Satoh N."/>
            <person name="Takami S."/>
            <person name="Terashima Y."/>
            <person name="Suzuki O."/>
            <person name="Nakagawa S."/>
            <person name="Senoh A."/>
            <person name="Mizoguchi H."/>
            <person name="Goto Y."/>
            <person name="Shimizu F."/>
            <person name="Wakebe H."/>
            <person name="Hishigaki H."/>
            <person name="Watanabe T."/>
            <person name="Sugiyama A."/>
            <person name="Takemoto M."/>
            <person name="Kawakami B."/>
            <person name="Yamazaki M."/>
            <person name="Watanabe K."/>
            <person name="Kumagai A."/>
            <person name="Itakura S."/>
            <person name="Fukuzumi Y."/>
            <person name="Fujimori Y."/>
            <person name="Komiyama M."/>
            <person name="Tashiro H."/>
            <person name="Tanigami A."/>
            <person name="Fujiwara T."/>
            <person name="Ono T."/>
            <person name="Yamada K."/>
            <person name="Fujii Y."/>
            <person name="Ozaki K."/>
            <person name="Hirao M."/>
            <person name="Ohmori Y."/>
            <person name="Kawabata A."/>
            <person name="Hikiji T."/>
            <person name="Kobatake N."/>
            <person name="Inagaki H."/>
            <person name="Ikema Y."/>
            <person name="Okamoto S."/>
            <person name="Okitani R."/>
            <person name="Kawakami T."/>
            <person name="Noguchi S."/>
            <person name="Itoh T."/>
            <person name="Shigeta K."/>
            <person name="Senba T."/>
            <person name="Matsumura K."/>
            <person name="Nakajima Y."/>
            <person name="Mizuno T."/>
            <person name="Morinaga M."/>
            <person name="Sasaki M."/>
            <person name="Togashi T."/>
            <person name="Oyama M."/>
            <person name="Hata H."/>
            <person name="Watanabe M."/>
            <person name="Komatsu T."/>
            <person name="Mizushima-Sugano J."/>
            <person name="Satoh T."/>
            <person name="Shirai Y."/>
            <person name="Takahashi Y."/>
            <person name="Nakagawa K."/>
            <person name="Okumura K."/>
            <person name="Nagase T."/>
            <person name="Nomura N."/>
            <person name="Kikuchi H."/>
            <person name="Masuho Y."/>
            <person name="Yamashita R."/>
            <person name="Nakai K."/>
            <person name="Yada T."/>
            <person name="Nakamura Y."/>
            <person name="Ohara O."/>
            <person name="Isogai T."/>
            <person name="Sugano S."/>
        </authorList>
    </citation>
    <scope>NUCLEOTIDE SEQUENCE [LARGE SCALE MRNA]</scope>
    <scope>VARIANT MET-412</scope>
    <source>
        <tissue>Thalamus</tissue>
    </source>
</reference>
<reference key="5">
    <citation type="journal article" date="2004" name="Nature">
        <title>The DNA sequence and analysis of human chromosome 13.</title>
        <authorList>
            <person name="Dunham A."/>
            <person name="Matthews L.H."/>
            <person name="Burton J."/>
            <person name="Ashurst J.L."/>
            <person name="Howe K.L."/>
            <person name="Ashcroft K.J."/>
            <person name="Beare D.M."/>
            <person name="Burford D.C."/>
            <person name="Hunt S.E."/>
            <person name="Griffiths-Jones S."/>
            <person name="Jones M.C."/>
            <person name="Keenan S.J."/>
            <person name="Oliver K."/>
            <person name="Scott C.E."/>
            <person name="Ainscough R."/>
            <person name="Almeida J.P."/>
            <person name="Ambrose K.D."/>
            <person name="Andrews D.T."/>
            <person name="Ashwell R.I.S."/>
            <person name="Babbage A.K."/>
            <person name="Bagguley C.L."/>
            <person name="Bailey J."/>
            <person name="Bannerjee R."/>
            <person name="Barlow K.F."/>
            <person name="Bates K."/>
            <person name="Beasley H."/>
            <person name="Bird C.P."/>
            <person name="Bray-Allen S."/>
            <person name="Brown A.J."/>
            <person name="Brown J.Y."/>
            <person name="Burrill W."/>
            <person name="Carder C."/>
            <person name="Carter N.P."/>
            <person name="Chapman J.C."/>
            <person name="Clamp M.E."/>
            <person name="Clark S.Y."/>
            <person name="Clarke G."/>
            <person name="Clee C.M."/>
            <person name="Clegg S.C."/>
            <person name="Cobley V."/>
            <person name="Collins J.E."/>
            <person name="Corby N."/>
            <person name="Coville G.J."/>
            <person name="Deloukas P."/>
            <person name="Dhami P."/>
            <person name="Dunham I."/>
            <person name="Dunn M."/>
            <person name="Earthrowl M.E."/>
            <person name="Ellington A.G."/>
            <person name="Faulkner L."/>
            <person name="Frankish A.G."/>
            <person name="Frankland J."/>
            <person name="French L."/>
            <person name="Garner P."/>
            <person name="Garnett J."/>
            <person name="Gilbert J.G.R."/>
            <person name="Gilson C.J."/>
            <person name="Ghori J."/>
            <person name="Grafham D.V."/>
            <person name="Gribble S.M."/>
            <person name="Griffiths C."/>
            <person name="Hall R.E."/>
            <person name="Hammond S."/>
            <person name="Harley J.L."/>
            <person name="Hart E.A."/>
            <person name="Heath P.D."/>
            <person name="Howden P.J."/>
            <person name="Huckle E.J."/>
            <person name="Hunt P.J."/>
            <person name="Hunt A.R."/>
            <person name="Johnson C."/>
            <person name="Johnson D."/>
            <person name="Kay M."/>
            <person name="Kimberley A.M."/>
            <person name="King A."/>
            <person name="Laird G.K."/>
            <person name="Langford C.J."/>
            <person name="Lawlor S."/>
            <person name="Leongamornlert D.A."/>
            <person name="Lloyd D.M."/>
            <person name="Lloyd C."/>
            <person name="Loveland J.E."/>
            <person name="Lovell J."/>
            <person name="Martin S."/>
            <person name="Mashreghi-Mohammadi M."/>
            <person name="McLaren S.J."/>
            <person name="McMurray A."/>
            <person name="Milne S."/>
            <person name="Moore M.J.F."/>
            <person name="Nickerson T."/>
            <person name="Palmer S.A."/>
            <person name="Pearce A.V."/>
            <person name="Peck A.I."/>
            <person name="Pelan S."/>
            <person name="Phillimore B."/>
            <person name="Porter K.M."/>
            <person name="Rice C.M."/>
            <person name="Searle S."/>
            <person name="Sehra H.K."/>
            <person name="Shownkeen R."/>
            <person name="Skuce C.D."/>
            <person name="Smith M."/>
            <person name="Steward C.A."/>
            <person name="Sycamore N."/>
            <person name="Tester J."/>
            <person name="Thomas D.W."/>
            <person name="Tracey A."/>
            <person name="Tromans A."/>
            <person name="Tubby B."/>
            <person name="Wall M."/>
            <person name="Wallis J.M."/>
            <person name="West A.P."/>
            <person name="Whitehead S.L."/>
            <person name="Willey D.L."/>
            <person name="Wilming L."/>
            <person name="Wray P.W."/>
            <person name="Wright M.W."/>
            <person name="Young L."/>
            <person name="Coulson A."/>
            <person name="Durbin R.M."/>
            <person name="Hubbard T."/>
            <person name="Sulston J.E."/>
            <person name="Beck S."/>
            <person name="Bentley D.R."/>
            <person name="Rogers J."/>
            <person name="Ross M.T."/>
        </authorList>
    </citation>
    <scope>NUCLEOTIDE SEQUENCE [LARGE SCALE GENOMIC DNA]</scope>
</reference>
<reference key="6">
    <citation type="journal article" date="2004" name="Genome Res.">
        <title>The status, quality, and expansion of the NIH full-length cDNA project: the Mammalian Gene Collection (MGC).</title>
        <authorList>
            <consortium name="The MGC Project Team"/>
        </authorList>
    </citation>
    <scope>NUCLEOTIDE SEQUENCE [LARGE SCALE MRNA]</scope>
</reference>
<reference key="7">
    <citation type="journal article" date="2009" name="Am. J. Hum. Genet.">
        <title>Mutations in the heparan-sulfate proteoglycan glypican 6 (GPC6) impair endochondral ossification and cause recessive omodysplasia.</title>
        <authorList>
            <person name="Campos-Xavier A.B."/>
            <person name="Martinet D."/>
            <person name="Bateman J."/>
            <person name="Belluoccio D."/>
            <person name="Rowley L."/>
            <person name="Tan T.Y."/>
            <person name="Baxova A."/>
            <person name="Gustavson K.H."/>
            <person name="Borochowitz Z.U."/>
            <person name="Innes A.M."/>
            <person name="Unger S."/>
            <person name="Beckmann J.S."/>
            <person name="Mittaz L."/>
            <person name="Ballhausen D."/>
            <person name="Superti-Furga A."/>
            <person name="Savarirayan R."/>
            <person name="Bonafe L."/>
        </authorList>
    </citation>
    <scope>INVOLVEMENT IN OMOD1</scope>
</reference>
<reference key="8">
    <citation type="journal article" date="2011" name="Biochem. J.">
        <title>NFAT promotes carcinoma invasive migration through glypican-6.</title>
        <authorList>
            <person name="Yiu G.K."/>
            <person name="Kaunisto A."/>
            <person name="Chin Y.R."/>
            <person name="Toker A."/>
        </authorList>
    </citation>
    <scope>FUNCTION</scope>
    <scope>TISSUE SPECIFICITY</scope>
    <scope>INDUCTION</scope>
</reference>